<name>SPRT_PSEPW</name>
<feature type="chain" id="PRO_1000133247" description="Protein SprT">
    <location>
        <begin position="1"/>
        <end position="164"/>
    </location>
</feature>
<feature type="domain" description="SprT-like" evidence="1">
    <location>
        <begin position="14"/>
        <end position="156"/>
    </location>
</feature>
<feature type="active site" evidence="1">
    <location>
        <position position="70"/>
    </location>
</feature>
<feature type="binding site" evidence="1">
    <location>
        <position position="69"/>
    </location>
    <ligand>
        <name>Zn(2+)</name>
        <dbReference type="ChEBI" id="CHEBI:29105"/>
    </ligand>
</feature>
<feature type="binding site" evidence="1">
    <location>
        <position position="73"/>
    </location>
    <ligand>
        <name>Zn(2+)</name>
        <dbReference type="ChEBI" id="CHEBI:29105"/>
    </ligand>
</feature>
<protein>
    <recommendedName>
        <fullName evidence="1">Protein SprT</fullName>
    </recommendedName>
</protein>
<reference key="1">
    <citation type="submission" date="2008-02" db="EMBL/GenBank/DDBJ databases">
        <title>Complete sequence of Pseudomonas putida W619.</title>
        <authorList>
            <person name="Copeland A."/>
            <person name="Lucas S."/>
            <person name="Lapidus A."/>
            <person name="Barry K."/>
            <person name="Detter J.C."/>
            <person name="Glavina del Rio T."/>
            <person name="Dalin E."/>
            <person name="Tice H."/>
            <person name="Pitluck S."/>
            <person name="Chain P."/>
            <person name="Malfatti S."/>
            <person name="Shin M."/>
            <person name="Vergez L."/>
            <person name="Schmutz J."/>
            <person name="Larimer F."/>
            <person name="Land M."/>
            <person name="Hauser L."/>
            <person name="Kyrpides N."/>
            <person name="Kim E."/>
            <person name="Taghavi S."/>
            <person name="Vangronsveld D."/>
            <person name="van der Lelie D."/>
            <person name="Richardson P."/>
        </authorList>
    </citation>
    <scope>NUCLEOTIDE SEQUENCE [LARGE SCALE GENOMIC DNA]</scope>
    <source>
        <strain>W619</strain>
    </source>
</reference>
<comment type="cofactor">
    <cofactor evidence="1">
        <name>Zn(2+)</name>
        <dbReference type="ChEBI" id="CHEBI:29105"/>
    </cofactor>
    <text evidence="1">Binds 1 zinc ion.</text>
</comment>
<comment type="subcellular location">
    <subcellularLocation>
        <location evidence="1">Cytoplasm</location>
    </subcellularLocation>
</comment>
<comment type="similarity">
    <text evidence="1">Belongs to the SprT family.</text>
</comment>
<sequence length="164" mass="19688">MPELLKQRVETCYQQAETFFKRPFPRPEVSFKLRGQKAGVAHLHENLLRFNLQLYRENQEDFLRQTVAHEVAHLVAHQLFGDRIQAHGEEWQLIMRGVYELPPNRCHNYEVQRRVATRYIYRCPCPQGEFAFTAQRHKLVRQGRRYLCKRCRETLVYSGETRVE</sequence>
<organism>
    <name type="scientific">Pseudomonas putida (strain W619)</name>
    <dbReference type="NCBI Taxonomy" id="390235"/>
    <lineage>
        <taxon>Bacteria</taxon>
        <taxon>Pseudomonadati</taxon>
        <taxon>Pseudomonadota</taxon>
        <taxon>Gammaproteobacteria</taxon>
        <taxon>Pseudomonadales</taxon>
        <taxon>Pseudomonadaceae</taxon>
        <taxon>Pseudomonas</taxon>
    </lineage>
</organism>
<gene>
    <name evidence="1" type="primary">sprT</name>
    <name type="ordered locus">PputW619_1201</name>
</gene>
<evidence type="ECO:0000255" key="1">
    <source>
        <dbReference type="HAMAP-Rule" id="MF_00746"/>
    </source>
</evidence>
<dbReference type="EMBL" id="CP000949">
    <property type="protein sequence ID" value="ACA71706.1"/>
    <property type="molecule type" value="Genomic_DNA"/>
</dbReference>
<dbReference type="STRING" id="390235.PputW619_1201"/>
<dbReference type="KEGG" id="ppw:PputW619_1201"/>
<dbReference type="eggNOG" id="COG3091">
    <property type="taxonomic scope" value="Bacteria"/>
</dbReference>
<dbReference type="HOGENOM" id="CLU_113336_0_1_6"/>
<dbReference type="OrthoDB" id="267364at2"/>
<dbReference type="GO" id="GO:0005737">
    <property type="term" value="C:cytoplasm"/>
    <property type="evidence" value="ECO:0007669"/>
    <property type="project" value="UniProtKB-SubCell"/>
</dbReference>
<dbReference type="GO" id="GO:0008270">
    <property type="term" value="F:zinc ion binding"/>
    <property type="evidence" value="ECO:0007669"/>
    <property type="project" value="UniProtKB-UniRule"/>
</dbReference>
<dbReference type="GO" id="GO:0006950">
    <property type="term" value="P:response to stress"/>
    <property type="evidence" value="ECO:0007669"/>
    <property type="project" value="UniProtKB-ARBA"/>
</dbReference>
<dbReference type="HAMAP" id="MF_00746">
    <property type="entry name" value="SprT"/>
    <property type="match status" value="1"/>
</dbReference>
<dbReference type="InterPro" id="IPR006640">
    <property type="entry name" value="SprT-like_domain"/>
</dbReference>
<dbReference type="InterPro" id="IPR023483">
    <property type="entry name" value="Uncharacterised_SprT"/>
</dbReference>
<dbReference type="NCBIfam" id="NF003421">
    <property type="entry name" value="PRK04860.1"/>
    <property type="match status" value="1"/>
</dbReference>
<dbReference type="PANTHER" id="PTHR38773">
    <property type="entry name" value="PROTEIN SPRT"/>
    <property type="match status" value="1"/>
</dbReference>
<dbReference type="PANTHER" id="PTHR38773:SF1">
    <property type="entry name" value="PROTEIN SPRT"/>
    <property type="match status" value="1"/>
</dbReference>
<dbReference type="Pfam" id="PF10263">
    <property type="entry name" value="SprT-like"/>
    <property type="match status" value="1"/>
</dbReference>
<dbReference type="SMART" id="SM00731">
    <property type="entry name" value="SprT"/>
    <property type="match status" value="1"/>
</dbReference>
<dbReference type="PROSITE" id="PS00142">
    <property type="entry name" value="ZINC_PROTEASE"/>
    <property type="match status" value="1"/>
</dbReference>
<keyword id="KW-0963">Cytoplasm</keyword>
<keyword id="KW-0479">Metal-binding</keyword>
<keyword id="KW-0862">Zinc</keyword>
<accession>B1J1K1</accession>
<proteinExistence type="inferred from homology"/>